<proteinExistence type="inferred from homology"/>
<evidence type="ECO:0000255" key="1">
    <source>
        <dbReference type="HAMAP-Rule" id="MF_00760"/>
    </source>
</evidence>
<dbReference type="EMBL" id="BA000028">
    <property type="protein sequence ID" value="BAC13734.1"/>
    <property type="molecule type" value="Genomic_DNA"/>
</dbReference>
<dbReference type="RefSeq" id="WP_011066177.1">
    <property type="nucleotide sequence ID" value="NC_004193.1"/>
</dbReference>
<dbReference type="SMR" id="Q8EQC3"/>
<dbReference type="STRING" id="221109.gene:10734018"/>
<dbReference type="KEGG" id="oih:OB1778"/>
<dbReference type="eggNOG" id="COG5582">
    <property type="taxonomic scope" value="Bacteria"/>
</dbReference>
<dbReference type="HOGENOM" id="CLU_126019_0_0_9"/>
<dbReference type="OrthoDB" id="2155814at2"/>
<dbReference type="PhylomeDB" id="Q8EQC3"/>
<dbReference type="Proteomes" id="UP000000822">
    <property type="component" value="Chromosome"/>
</dbReference>
<dbReference type="Gene3D" id="3.40.1530.30">
    <property type="entry name" value="Uncharacterised family UPF0302, N-terminal domain"/>
    <property type="match status" value="1"/>
</dbReference>
<dbReference type="Gene3D" id="4.10.810.10">
    <property type="entry name" value="Virus Scaffolding Protein, Chain A"/>
    <property type="match status" value="1"/>
</dbReference>
<dbReference type="HAMAP" id="MF_00760">
    <property type="entry name" value="UPF0302"/>
    <property type="match status" value="1"/>
</dbReference>
<dbReference type="InterPro" id="IPR014957">
    <property type="entry name" value="IDEAL_dom"/>
</dbReference>
<dbReference type="InterPro" id="IPR011188">
    <property type="entry name" value="UPF0302"/>
</dbReference>
<dbReference type="InterPro" id="IPR014963">
    <property type="entry name" value="UPF0302_N"/>
</dbReference>
<dbReference type="InterPro" id="IPR038091">
    <property type="entry name" value="UPF0302_N_sf"/>
</dbReference>
<dbReference type="InterPro" id="IPR027393">
    <property type="entry name" value="Virus_scaffolding_prot_C"/>
</dbReference>
<dbReference type="NCBIfam" id="NF002965">
    <property type="entry name" value="PRK03636.1"/>
    <property type="match status" value="1"/>
</dbReference>
<dbReference type="Pfam" id="PF08858">
    <property type="entry name" value="IDEAL"/>
    <property type="match status" value="1"/>
</dbReference>
<dbReference type="Pfam" id="PF08864">
    <property type="entry name" value="UPF0302"/>
    <property type="match status" value="1"/>
</dbReference>
<dbReference type="PIRSF" id="PIRSF007165">
    <property type="entry name" value="UCP007165"/>
    <property type="match status" value="1"/>
</dbReference>
<dbReference type="SMART" id="SM00914">
    <property type="entry name" value="IDEAL"/>
    <property type="match status" value="1"/>
</dbReference>
<reference key="1">
    <citation type="journal article" date="2002" name="Nucleic Acids Res.">
        <title>Genome sequence of Oceanobacillus iheyensis isolated from the Iheya Ridge and its unexpected adaptive capabilities to extreme environments.</title>
        <authorList>
            <person name="Takami H."/>
            <person name="Takaki Y."/>
            <person name="Uchiyama I."/>
        </authorList>
    </citation>
    <scope>NUCLEOTIDE SEQUENCE [LARGE SCALE GENOMIC DNA]</scope>
    <source>
        <strain>DSM 14371 / CIP 107618 / JCM 11309 / KCTC 3954 / HTE831</strain>
    </source>
</reference>
<gene>
    <name type="ordered locus">OB1778</name>
</gene>
<keyword id="KW-1185">Reference proteome</keyword>
<organism>
    <name type="scientific">Oceanobacillus iheyensis (strain DSM 14371 / CIP 107618 / JCM 11309 / KCTC 3954 / HTE831)</name>
    <dbReference type="NCBI Taxonomy" id="221109"/>
    <lineage>
        <taxon>Bacteria</taxon>
        <taxon>Bacillati</taxon>
        <taxon>Bacillota</taxon>
        <taxon>Bacilli</taxon>
        <taxon>Bacillales</taxon>
        <taxon>Bacillaceae</taxon>
        <taxon>Oceanobacillus</taxon>
    </lineage>
</organism>
<accession>Q8EQC3</accession>
<protein>
    <recommendedName>
        <fullName evidence="1">UPF0302 protein OB1778</fullName>
    </recommendedName>
</protein>
<name>Y1778_OCEIH</name>
<sequence>MLSPVTAKDKKSFIQWFLNHYRLKKRESVWILNYLVNHSDLLANVHFVRDVKYCPRGIMMTSHCSDEVPFRFYKNHLVTTDAEKSFHDIRLNQNESLYVQLNFRKSNQHSYYASVLEENPFIPEDYYLTTDDKETANGLLDYLLFEQKRNKIIFDIDKALDNGDKELFQKLSEKLEKLSSNRQK</sequence>
<feature type="chain" id="PRO_0000216103" description="UPF0302 protein OB1778">
    <location>
        <begin position="1"/>
        <end position="184"/>
    </location>
</feature>
<comment type="similarity">
    <text evidence="1">Belongs to the UPF0302 family.</text>
</comment>